<keyword id="KW-0002">3D-structure</keyword>
<keyword id="KW-0025">Alternative splicing</keyword>
<keyword id="KW-0507">mRNA processing</keyword>
<keyword id="KW-0508">mRNA splicing</keyword>
<keyword id="KW-0539">Nucleus</keyword>
<keyword id="KW-0597">Phosphoprotein</keyword>
<keyword id="KW-1185">Reference proteome</keyword>
<keyword id="KW-0747">Spliceosome</keyword>
<evidence type="ECO:0000250" key="1">
    <source>
        <dbReference type="UniProtKB" id="Q15393"/>
    </source>
</evidence>
<evidence type="ECO:0000303" key="2">
    <source>
    </source>
</evidence>
<evidence type="ECO:0000305" key="3"/>
<evidence type="ECO:0007829" key="4">
    <source>
        <dbReference type="PDB" id="7B9C"/>
    </source>
</evidence>
<organism>
    <name type="scientific">Mus musculus</name>
    <name type="common">Mouse</name>
    <dbReference type="NCBI Taxonomy" id="10090"/>
    <lineage>
        <taxon>Eukaryota</taxon>
        <taxon>Metazoa</taxon>
        <taxon>Chordata</taxon>
        <taxon>Craniata</taxon>
        <taxon>Vertebrata</taxon>
        <taxon>Euteleostomi</taxon>
        <taxon>Mammalia</taxon>
        <taxon>Eutheria</taxon>
        <taxon>Euarchontoglires</taxon>
        <taxon>Glires</taxon>
        <taxon>Rodentia</taxon>
        <taxon>Myomorpha</taxon>
        <taxon>Muroidea</taxon>
        <taxon>Muridae</taxon>
        <taxon>Murinae</taxon>
        <taxon>Mus</taxon>
        <taxon>Mus</taxon>
    </lineage>
</organism>
<name>SF3B3_MOUSE</name>
<feature type="chain" id="PRO_0000276755" description="Splicing factor 3B subunit 3">
    <location>
        <begin position="1"/>
        <end position="1217"/>
    </location>
</feature>
<feature type="region of interest" description="Interaction with PHF5A, SF3B1 and SF3B5" evidence="1">
    <location>
        <begin position="105"/>
        <end position="119"/>
    </location>
</feature>
<feature type="region of interest" description="Interaction with PHF5A, SF3B1 and SF3B5" evidence="1">
    <location>
        <begin position="145"/>
        <end position="168"/>
    </location>
</feature>
<feature type="region of interest" description="Interaction with SF3B1 and SF3B5" evidence="1">
    <location>
        <begin position="193"/>
        <end position="231"/>
    </location>
</feature>
<feature type="region of interest" description="Interaction with SF3B1 and SF3B5" evidence="1">
    <location>
        <begin position="786"/>
        <end position="804"/>
    </location>
</feature>
<feature type="region of interest" description="Interaction with SF3B1" evidence="1">
    <location>
        <begin position="1028"/>
        <end position="1049"/>
    </location>
</feature>
<feature type="region of interest" description="Interaction with SF3B5" evidence="1">
    <location>
        <begin position="1100"/>
        <end position="1123"/>
    </location>
</feature>
<feature type="site" description="Interaction with SF3B5" evidence="1">
    <location>
        <position position="284"/>
    </location>
</feature>
<feature type="site" description="Interaction with SF3B5" evidence="1">
    <location>
        <position position="306"/>
    </location>
</feature>
<feature type="site" description="Interaction with SF3B5" evidence="1">
    <location>
        <position position="352"/>
    </location>
</feature>
<feature type="site" description="Interaction with SF3B5" evidence="1">
    <location>
        <position position="429"/>
    </location>
</feature>
<feature type="site" description="Interaction with SF3B1" evidence="1">
    <location>
        <position position="988"/>
    </location>
</feature>
<feature type="site" description="Interaction with SF3B1" evidence="1">
    <location>
        <position position="1171"/>
    </location>
</feature>
<feature type="modified residue" description="Phosphoserine" evidence="1">
    <location>
        <position position="156"/>
    </location>
</feature>
<feature type="modified residue" description="Phosphothreonine" evidence="1">
    <location>
        <position position="1200"/>
    </location>
</feature>
<feature type="splice variant" id="VSP_022980" description="In isoform 2." evidence="2">
    <location>
        <begin position="819"/>
        <end position="913"/>
    </location>
</feature>
<feature type="sequence conflict" description="In Ref. 1; BAE28225." evidence="3" ref="1">
    <original>L</original>
    <variation>I</variation>
    <location>
        <position position="327"/>
    </location>
</feature>
<feature type="sequence conflict" description="In Ref. 1; BAE28225." evidence="3" ref="1">
    <original>N</original>
    <variation>S</variation>
    <location>
        <position position="870"/>
    </location>
</feature>
<feature type="sequence conflict" description="In Ref. 1; BAC97845." evidence="3" ref="1">
    <original>H</original>
    <variation>Y</variation>
    <location>
        <position position="1135"/>
    </location>
</feature>
<feature type="strand" evidence="4">
    <location>
        <begin position="3"/>
        <end position="9"/>
    </location>
</feature>
<feature type="strand" evidence="4">
    <location>
        <begin position="15"/>
        <end position="20"/>
    </location>
</feature>
<feature type="strand" evidence="4">
    <location>
        <begin position="22"/>
        <end position="26"/>
    </location>
</feature>
<feature type="strand" evidence="4">
    <location>
        <begin position="29"/>
        <end position="33"/>
    </location>
</feature>
<feature type="strand" evidence="4">
    <location>
        <begin position="35"/>
        <end position="43"/>
    </location>
</feature>
<feature type="turn" evidence="4">
    <location>
        <begin position="45"/>
        <end position="47"/>
    </location>
</feature>
<feature type="strand" evidence="4">
    <location>
        <begin position="50"/>
        <end position="57"/>
    </location>
</feature>
<feature type="strand" evidence="4">
    <location>
        <begin position="64"/>
        <end position="68"/>
    </location>
</feature>
<feature type="strand" evidence="4">
    <location>
        <begin position="77"/>
        <end position="81"/>
    </location>
</feature>
<feature type="strand" evidence="4">
    <location>
        <begin position="83"/>
        <end position="93"/>
    </location>
</feature>
<feature type="turn" evidence="4">
    <location>
        <begin position="94"/>
        <end position="97"/>
    </location>
</feature>
<feature type="strand" evidence="4">
    <location>
        <begin position="98"/>
        <end position="106"/>
    </location>
</feature>
<feature type="strand" evidence="4">
    <location>
        <begin position="110"/>
        <end position="112"/>
    </location>
</feature>
<feature type="strand" evidence="4">
    <location>
        <begin position="114"/>
        <end position="117"/>
    </location>
</feature>
<feature type="strand" evidence="4">
    <location>
        <begin position="119"/>
        <end position="123"/>
    </location>
</feature>
<feature type="strand" evidence="4">
    <location>
        <begin position="127"/>
        <end position="133"/>
    </location>
</feature>
<feature type="strand" evidence="4">
    <location>
        <begin position="135"/>
        <end position="137"/>
    </location>
</feature>
<feature type="strand" evidence="4">
    <location>
        <begin position="139"/>
        <end position="146"/>
    </location>
</feature>
<feature type="strand" evidence="4">
    <location>
        <begin position="152"/>
        <end position="154"/>
    </location>
</feature>
<feature type="strand" evidence="4">
    <location>
        <begin position="165"/>
        <end position="173"/>
    </location>
</feature>
<feature type="strand" evidence="4">
    <location>
        <begin position="181"/>
        <end position="188"/>
    </location>
</feature>
<feature type="helix" evidence="4">
    <location>
        <begin position="192"/>
        <end position="194"/>
    </location>
</feature>
<feature type="helix" evidence="4">
    <location>
        <begin position="199"/>
        <end position="203"/>
    </location>
</feature>
<feature type="strand" evidence="4">
    <location>
        <begin position="207"/>
        <end position="214"/>
    </location>
</feature>
<feature type="turn" evidence="4">
    <location>
        <begin position="215"/>
        <end position="218"/>
    </location>
</feature>
<feature type="strand" evidence="4">
    <location>
        <begin position="219"/>
        <end position="227"/>
    </location>
</feature>
<feature type="strand" evidence="4">
    <location>
        <begin position="232"/>
        <end position="237"/>
    </location>
</feature>
<feature type="helix" evidence="4">
    <location>
        <begin position="241"/>
        <end position="243"/>
    </location>
</feature>
<feature type="strand" evidence="4">
    <location>
        <begin position="248"/>
        <end position="259"/>
    </location>
</feature>
<feature type="strand" evidence="4">
    <location>
        <begin position="261"/>
        <end position="263"/>
    </location>
</feature>
<feature type="strand" evidence="4">
    <location>
        <begin position="267"/>
        <end position="270"/>
    </location>
</feature>
<feature type="strand" evidence="4">
    <location>
        <begin position="287"/>
        <end position="294"/>
    </location>
</feature>
<feature type="strand" evidence="4">
    <location>
        <begin position="299"/>
        <end position="305"/>
    </location>
</feature>
<feature type="strand" evidence="4">
    <location>
        <begin position="308"/>
        <end position="318"/>
    </location>
</feature>
<feature type="strand" evidence="4">
    <location>
        <begin position="321"/>
        <end position="332"/>
    </location>
</feature>
<feature type="strand" evidence="4">
    <location>
        <begin position="336"/>
        <end position="342"/>
    </location>
</feature>
<feature type="turn" evidence="4">
    <location>
        <begin position="343"/>
        <end position="345"/>
    </location>
</feature>
<feature type="strand" evidence="4">
    <location>
        <begin position="346"/>
        <end position="354"/>
    </location>
</feature>
<feature type="strand" evidence="4">
    <location>
        <begin position="356"/>
        <end position="361"/>
    </location>
</feature>
<feature type="strand" evidence="4">
    <location>
        <begin position="373"/>
        <end position="377"/>
    </location>
</feature>
<feature type="strand" evidence="4">
    <location>
        <begin position="393"/>
        <end position="401"/>
    </location>
</feature>
<feature type="strand" evidence="4">
    <location>
        <begin position="406"/>
        <end position="413"/>
    </location>
</feature>
<feature type="strand" evidence="4">
    <location>
        <begin position="422"/>
        <end position="427"/>
    </location>
</feature>
<feature type="helix" evidence="4">
    <location>
        <begin position="430"/>
        <end position="432"/>
    </location>
</feature>
<feature type="strand" evidence="4">
    <location>
        <begin position="434"/>
        <end position="440"/>
    </location>
</feature>
<feature type="strand" evidence="4">
    <location>
        <begin position="774"/>
        <end position="780"/>
    </location>
</feature>
<feature type="strand" evidence="4">
    <location>
        <begin position="782"/>
        <end position="790"/>
    </location>
</feature>
<feature type="turn" evidence="4">
    <location>
        <begin position="792"/>
        <end position="794"/>
    </location>
</feature>
<feature type="strand" evidence="4">
    <location>
        <begin position="797"/>
        <end position="805"/>
    </location>
</feature>
<feature type="helix" evidence="4">
    <location>
        <begin position="809"/>
        <end position="825"/>
    </location>
</feature>
<feature type="helix" evidence="4">
    <location>
        <begin position="829"/>
        <end position="831"/>
    </location>
</feature>
<feature type="helix" evidence="4">
    <location>
        <begin position="832"/>
        <end position="844"/>
    </location>
</feature>
<feature type="helix" evidence="4">
    <location>
        <begin position="849"/>
        <end position="852"/>
    </location>
</feature>
<feature type="strand" evidence="4">
    <location>
        <begin position="862"/>
        <end position="869"/>
    </location>
</feature>
<feature type="strand" evidence="4">
    <location>
        <begin position="871"/>
        <end position="873"/>
    </location>
</feature>
<feature type="strand" evidence="4">
    <location>
        <begin position="876"/>
        <end position="881"/>
    </location>
</feature>
<feature type="strand" evidence="4">
    <location>
        <begin position="886"/>
        <end position="894"/>
    </location>
</feature>
<feature type="strand" evidence="4">
    <location>
        <begin position="897"/>
        <end position="899"/>
    </location>
</feature>
<feature type="strand" evidence="4">
    <location>
        <begin position="903"/>
        <end position="912"/>
    </location>
</feature>
<dbReference type="EMBL" id="AK085705">
    <property type="protein sequence ID" value="BAC39513.1"/>
    <property type="molecule type" value="mRNA"/>
</dbReference>
<dbReference type="EMBL" id="AK088268">
    <property type="protein sequence ID" value="BAC40248.1"/>
    <property type="molecule type" value="mRNA"/>
</dbReference>
<dbReference type="EMBL" id="AK129035">
    <property type="protein sequence ID" value="BAC97845.1"/>
    <property type="molecule type" value="Transcribed_RNA"/>
</dbReference>
<dbReference type="EMBL" id="AK147914">
    <property type="protein sequence ID" value="BAE28225.1"/>
    <property type="molecule type" value="mRNA"/>
</dbReference>
<dbReference type="EMBL" id="BC011412">
    <property type="protein sequence ID" value="AAH11412.1"/>
    <property type="molecule type" value="mRNA"/>
</dbReference>
<dbReference type="EMBL" id="BC031197">
    <property type="protein sequence ID" value="AAH31197.2"/>
    <property type="molecule type" value="mRNA"/>
</dbReference>
<dbReference type="EMBL" id="BC042580">
    <property type="protein sequence ID" value="AAH42580.1"/>
    <property type="molecule type" value="mRNA"/>
</dbReference>
<dbReference type="CCDS" id="CCDS22665.1">
    <molecule id="Q921M3-1"/>
</dbReference>
<dbReference type="RefSeq" id="NP_598714.1">
    <molecule id="Q921M3-1"/>
    <property type="nucleotide sequence ID" value="NM_133953.2"/>
</dbReference>
<dbReference type="RefSeq" id="XP_006530581.1">
    <molecule id="Q921M3-1"/>
    <property type="nucleotide sequence ID" value="XM_006530518.5"/>
</dbReference>
<dbReference type="PDB" id="7B9C">
    <property type="method" value="X-ray"/>
    <property type="resolution" value="2.40 A"/>
    <property type="chains" value="A=1-442, A=768-915"/>
</dbReference>
<dbReference type="PDB" id="7OPI">
    <property type="method" value="X-ray"/>
    <property type="resolution" value="3.10 A"/>
    <property type="chains" value="A=1-442, A=768-915"/>
</dbReference>
<dbReference type="PDBsum" id="7B9C"/>
<dbReference type="PDBsum" id="7OPI"/>
<dbReference type="SMR" id="Q921M3"/>
<dbReference type="BioGRID" id="221759">
    <property type="interactions" value="68"/>
</dbReference>
<dbReference type="ComplexPortal" id="CPX-6803">
    <property type="entry name" value="SAGA complex, KAT2B variant"/>
</dbReference>
<dbReference type="ComplexPortal" id="CPX-920">
    <property type="entry name" value="SAGA complex, KAT2A variant"/>
</dbReference>
<dbReference type="FunCoup" id="Q921M3">
    <property type="interactions" value="4636"/>
</dbReference>
<dbReference type="IntAct" id="Q921M3">
    <property type="interactions" value="4"/>
</dbReference>
<dbReference type="MINT" id="Q921M3"/>
<dbReference type="STRING" id="10090.ENSMUSP00000045073"/>
<dbReference type="GlyGen" id="Q921M3">
    <property type="glycosylation" value="2 sites, 1 N-linked glycan (1 site), 1 O-linked glycan (1 site)"/>
</dbReference>
<dbReference type="iPTMnet" id="Q921M3"/>
<dbReference type="PhosphoSitePlus" id="Q921M3"/>
<dbReference type="SwissPalm" id="Q921M3"/>
<dbReference type="jPOST" id="Q921M3"/>
<dbReference type="PaxDb" id="10090-ENSMUSP00000045073"/>
<dbReference type="PeptideAtlas" id="Q921M3"/>
<dbReference type="ProteomicsDB" id="261505">
    <molecule id="Q921M3-1"/>
</dbReference>
<dbReference type="ProteomicsDB" id="261506">
    <molecule id="Q921M3-2"/>
</dbReference>
<dbReference type="Pumba" id="Q921M3"/>
<dbReference type="Antibodypedia" id="30001">
    <property type="antibodies" value="328 antibodies from 37 providers"/>
</dbReference>
<dbReference type="DNASU" id="101943"/>
<dbReference type="Ensembl" id="ENSMUST00000042012.7">
    <molecule id="Q921M3-1"/>
    <property type="protein sequence ID" value="ENSMUSP00000045073.6"/>
    <property type="gene ID" value="ENSMUSG00000033732.11"/>
</dbReference>
<dbReference type="GeneID" id="101943"/>
<dbReference type="KEGG" id="mmu:101943"/>
<dbReference type="UCSC" id="uc009nlb.1">
    <molecule id="Q921M3-1"/>
    <property type="organism name" value="mouse"/>
</dbReference>
<dbReference type="UCSC" id="uc009nlc.1">
    <molecule id="Q921M3-2"/>
    <property type="organism name" value="mouse"/>
</dbReference>
<dbReference type="AGR" id="MGI:1289341"/>
<dbReference type="CTD" id="23450"/>
<dbReference type="MGI" id="MGI:1289341">
    <property type="gene designation" value="Sf3b3"/>
</dbReference>
<dbReference type="VEuPathDB" id="HostDB:ENSMUSG00000033732"/>
<dbReference type="eggNOG" id="KOG1898">
    <property type="taxonomic scope" value="Eukaryota"/>
</dbReference>
<dbReference type="GeneTree" id="ENSGT00950000183151"/>
<dbReference type="HOGENOM" id="CLU_003246_0_0_1"/>
<dbReference type="InParanoid" id="Q921M3"/>
<dbReference type="OMA" id="PRATGHW"/>
<dbReference type="OrthoDB" id="436637at2759"/>
<dbReference type="PhylomeDB" id="Q921M3"/>
<dbReference type="TreeFam" id="TF105685"/>
<dbReference type="Reactome" id="R-MMU-72163">
    <property type="pathway name" value="mRNA Splicing - Major Pathway"/>
</dbReference>
<dbReference type="Reactome" id="R-MMU-72165">
    <property type="pathway name" value="mRNA Splicing - Minor Pathway"/>
</dbReference>
<dbReference type="BioGRID-ORCS" id="101943">
    <property type="hits" value="25 hits in 116 CRISPR screens"/>
</dbReference>
<dbReference type="ChiTaRS" id="Sf3b3">
    <property type="organism name" value="mouse"/>
</dbReference>
<dbReference type="PRO" id="PR:Q921M3"/>
<dbReference type="Proteomes" id="UP000000589">
    <property type="component" value="Chromosome 8"/>
</dbReference>
<dbReference type="RNAct" id="Q921M3">
    <property type="molecule type" value="protein"/>
</dbReference>
<dbReference type="Bgee" id="ENSMUSG00000033732">
    <property type="expression patterns" value="Expressed in frontonasal prominence and 262 other cell types or tissues"/>
</dbReference>
<dbReference type="ExpressionAtlas" id="Q921M3">
    <property type="expression patterns" value="baseline and differential"/>
</dbReference>
<dbReference type="GO" id="GO:0071013">
    <property type="term" value="C:catalytic step 2 spliceosome"/>
    <property type="evidence" value="ECO:0007669"/>
    <property type="project" value="Ensembl"/>
</dbReference>
<dbReference type="GO" id="GO:0005730">
    <property type="term" value="C:nucleolus"/>
    <property type="evidence" value="ECO:0007669"/>
    <property type="project" value="Ensembl"/>
</dbReference>
<dbReference type="GO" id="GO:0005654">
    <property type="term" value="C:nucleoplasm"/>
    <property type="evidence" value="ECO:0007669"/>
    <property type="project" value="Ensembl"/>
</dbReference>
<dbReference type="GO" id="GO:0005634">
    <property type="term" value="C:nucleus"/>
    <property type="evidence" value="ECO:0000250"/>
    <property type="project" value="UniProtKB"/>
</dbReference>
<dbReference type="GO" id="GO:0000124">
    <property type="term" value="C:SAGA complex"/>
    <property type="evidence" value="ECO:0000303"/>
    <property type="project" value="ComplexPortal"/>
</dbReference>
<dbReference type="GO" id="GO:0005689">
    <property type="term" value="C:U12-type spliceosomal complex"/>
    <property type="evidence" value="ECO:0007669"/>
    <property type="project" value="Ensembl"/>
</dbReference>
<dbReference type="GO" id="GO:0071005">
    <property type="term" value="C:U2-type precatalytic spliceosome"/>
    <property type="evidence" value="ECO:0000250"/>
    <property type="project" value="UniProtKB"/>
</dbReference>
<dbReference type="GO" id="GO:0005684">
    <property type="term" value="C:U2-type spliceosomal complex"/>
    <property type="evidence" value="ECO:0000250"/>
    <property type="project" value="UniProtKB"/>
</dbReference>
<dbReference type="GO" id="GO:0003676">
    <property type="term" value="F:nucleic acid binding"/>
    <property type="evidence" value="ECO:0007669"/>
    <property type="project" value="InterPro"/>
</dbReference>
<dbReference type="GO" id="GO:0044877">
    <property type="term" value="F:protein-containing complex binding"/>
    <property type="evidence" value="ECO:0007669"/>
    <property type="project" value="Ensembl"/>
</dbReference>
<dbReference type="GO" id="GO:0000398">
    <property type="term" value="P:mRNA splicing, via spliceosome"/>
    <property type="evidence" value="ECO:0000250"/>
    <property type="project" value="UniProtKB"/>
</dbReference>
<dbReference type="GO" id="GO:0042177">
    <property type="term" value="P:negative regulation of protein catabolic process"/>
    <property type="evidence" value="ECO:0007669"/>
    <property type="project" value="Ensembl"/>
</dbReference>
<dbReference type="GO" id="GO:0045893">
    <property type="term" value="P:positive regulation of DNA-templated transcription"/>
    <property type="evidence" value="ECO:0000303"/>
    <property type="project" value="ComplexPortal"/>
</dbReference>
<dbReference type="GO" id="GO:0006282">
    <property type="term" value="P:regulation of DNA repair"/>
    <property type="evidence" value="ECO:0000303"/>
    <property type="project" value="ComplexPortal"/>
</dbReference>
<dbReference type="GO" id="GO:0043484">
    <property type="term" value="P:regulation of RNA splicing"/>
    <property type="evidence" value="ECO:0000303"/>
    <property type="project" value="ComplexPortal"/>
</dbReference>
<dbReference type="FunFam" id="2.130.10.10:FF:001721">
    <property type="entry name" value="Spliceosomal protein sap, putative"/>
    <property type="match status" value="1"/>
</dbReference>
<dbReference type="FunFam" id="1.10.150.910:FF:000002">
    <property type="entry name" value="Splicing factor 3B subunit 3"/>
    <property type="match status" value="1"/>
</dbReference>
<dbReference type="FunFam" id="2.130.10.10:FF:000027">
    <property type="entry name" value="Splicing factor 3B subunit 3"/>
    <property type="match status" value="1"/>
</dbReference>
<dbReference type="FunFam" id="2.130.10.10:FF:000041">
    <property type="entry name" value="Splicing factor 3b subunit 3"/>
    <property type="match status" value="1"/>
</dbReference>
<dbReference type="Gene3D" id="1.10.150.910">
    <property type="match status" value="1"/>
</dbReference>
<dbReference type="Gene3D" id="2.130.10.10">
    <property type="entry name" value="YVTN repeat-like/Quinoprotein amine dehydrogenase"/>
    <property type="match status" value="3"/>
</dbReference>
<dbReference type="InterPro" id="IPR018846">
    <property type="entry name" value="Beta-prop_RSE1/DDB1/CPSF1_1st"/>
</dbReference>
<dbReference type="InterPro" id="IPR004871">
    <property type="entry name" value="Cleavage/polyA-sp_fac_asu_C"/>
</dbReference>
<dbReference type="InterPro" id="IPR050358">
    <property type="entry name" value="RSE1/DDB1/CFT1/CPSF1"/>
</dbReference>
<dbReference type="InterPro" id="IPR015943">
    <property type="entry name" value="WD40/YVTN_repeat-like_dom_sf"/>
</dbReference>
<dbReference type="InterPro" id="IPR036322">
    <property type="entry name" value="WD40_repeat_dom_sf"/>
</dbReference>
<dbReference type="PANTHER" id="PTHR10644">
    <property type="entry name" value="DNA REPAIR/RNA PROCESSING CPSF FAMILY"/>
    <property type="match status" value="1"/>
</dbReference>
<dbReference type="Pfam" id="PF10433">
    <property type="entry name" value="Beta-prop_RSE1_1st"/>
    <property type="match status" value="1"/>
</dbReference>
<dbReference type="Pfam" id="PF23726">
    <property type="entry name" value="Beta-prop_RSE1_2nd"/>
    <property type="match status" value="1"/>
</dbReference>
<dbReference type="Pfam" id="PF03178">
    <property type="entry name" value="CPSF_A"/>
    <property type="match status" value="1"/>
</dbReference>
<dbReference type="SUPFAM" id="SSF50978">
    <property type="entry name" value="WD40 repeat-like"/>
    <property type="match status" value="1"/>
</dbReference>
<comment type="function">
    <text evidence="1">Component of the 17S U2 SnRNP complex of the spliceosome, a large ribonucleoprotein complex that removes introns from transcribed pre-mRNAs. The 17S U2 SnRNP complex (1) directly participates in early spliceosome assembly and (2) mediates recognition of the intron branch site during pre-mRNA splicing by promoting the selection of the pre-mRNA branch-site adenosine, the nucleophile for the first step of splicing. Within the 17S U2 SnRNP complex, SF3B3 is part of the SF3B subcomplex, which is required for 'A' complex assembly formed by the stable binding of U2 snRNP to the branchpoint sequence in pre-mRNA. Sequence independent binding of SF3A and SF3B subcomplexes upstream of the branch site is essential, it may anchor U2 snRNP to the pre-mRNA. May also be involved in the assembly of the 'E' complex. Also acts as a component of the minor spliceosome, which is involved in the splicing of U12-type introns in pre-mRNAs.</text>
</comment>
<comment type="subunit">
    <text evidence="1">Component of the 17S U2 SnRNP complex, a ribonucleoprotein complex that contains small nuclear RNA (snRNA) U2 and a number of specific proteins. Part of the SF3B subcomplex of the 17S U2 SnRNP complex. SF3B associates with the splicing subcomplex SF3A and a 12S RNA unit to form the U2 small nuclear ribonucleoproteins complex (U2 snRNP). Within the SF3B subcomplex, interacts directly with SF3B1 (via HEAT domain), SF3B5 and PHF5A. Identified in the spliceosome A complex; remains associated with the spliceosome throughout the splicing process. Component of the spliceosome B complex. Identified in the spliceosome C complex. Identified in the spliceosome E complex. Component of the minor (U12-type spliceosome) spliceosome. Within this complex, interacts with SCNM1. Associates with the STAGA transcription coactivator-HAT complex. Interacts with SUPT3H. Interacts with TAF3.</text>
</comment>
<comment type="subcellular location">
    <subcellularLocation>
        <location evidence="1">Nucleus</location>
    </subcellularLocation>
</comment>
<comment type="alternative products">
    <event type="alternative splicing"/>
    <isoform>
        <id>Q921M3-1</id>
        <name>1</name>
        <sequence type="displayed"/>
    </isoform>
    <isoform>
        <id>Q921M3-2</id>
        <name>2</name>
        <sequence type="described" ref="VSP_022980"/>
    </isoform>
</comment>
<comment type="domain">
    <text evidence="1">The core of the protein consists of three beta-propeller domains.</text>
</comment>
<comment type="similarity">
    <text evidence="3">Belongs to the RSE1 family.</text>
</comment>
<gene>
    <name type="primary">Sf3b3</name>
    <name type="synonym">Kiaa0017</name>
</gene>
<accession>Q921M3</accession>
<accession>Q3UGI3</accession>
<accession>Q6ZQL0</accession>
<accession>Q8BUD9</accession>
<accession>Q8K2J8</accession>
<protein>
    <recommendedName>
        <fullName>Splicing factor 3B subunit 3</fullName>
    </recommendedName>
    <alternativeName>
        <fullName>Pre-mRNA-splicing factor SF3b 130 kDa subunit</fullName>
        <shortName>SF3b130</shortName>
    </alternativeName>
    <alternativeName>
        <fullName>Spliceosome-associated protein 130</fullName>
        <shortName>SAP 130</shortName>
    </alternativeName>
</protein>
<reference key="1">
    <citation type="journal article" date="2005" name="Science">
        <title>The transcriptional landscape of the mammalian genome.</title>
        <authorList>
            <person name="Carninci P."/>
            <person name="Kasukawa T."/>
            <person name="Katayama S."/>
            <person name="Gough J."/>
            <person name="Frith M.C."/>
            <person name="Maeda N."/>
            <person name="Oyama R."/>
            <person name="Ravasi T."/>
            <person name="Lenhard B."/>
            <person name="Wells C."/>
            <person name="Kodzius R."/>
            <person name="Shimokawa K."/>
            <person name="Bajic V.B."/>
            <person name="Brenner S.E."/>
            <person name="Batalov S."/>
            <person name="Forrest A.R."/>
            <person name="Zavolan M."/>
            <person name="Davis M.J."/>
            <person name="Wilming L.G."/>
            <person name="Aidinis V."/>
            <person name="Allen J.E."/>
            <person name="Ambesi-Impiombato A."/>
            <person name="Apweiler R."/>
            <person name="Aturaliya R.N."/>
            <person name="Bailey T.L."/>
            <person name="Bansal M."/>
            <person name="Baxter L."/>
            <person name="Beisel K.W."/>
            <person name="Bersano T."/>
            <person name="Bono H."/>
            <person name="Chalk A.M."/>
            <person name="Chiu K.P."/>
            <person name="Choudhary V."/>
            <person name="Christoffels A."/>
            <person name="Clutterbuck D.R."/>
            <person name="Crowe M.L."/>
            <person name="Dalla E."/>
            <person name="Dalrymple B.P."/>
            <person name="de Bono B."/>
            <person name="Della Gatta G."/>
            <person name="di Bernardo D."/>
            <person name="Down T."/>
            <person name="Engstrom P."/>
            <person name="Fagiolini M."/>
            <person name="Faulkner G."/>
            <person name="Fletcher C.F."/>
            <person name="Fukushima T."/>
            <person name="Furuno M."/>
            <person name="Futaki S."/>
            <person name="Gariboldi M."/>
            <person name="Georgii-Hemming P."/>
            <person name="Gingeras T.R."/>
            <person name="Gojobori T."/>
            <person name="Green R.E."/>
            <person name="Gustincich S."/>
            <person name="Harbers M."/>
            <person name="Hayashi Y."/>
            <person name="Hensch T.K."/>
            <person name="Hirokawa N."/>
            <person name="Hill D."/>
            <person name="Huminiecki L."/>
            <person name="Iacono M."/>
            <person name="Ikeo K."/>
            <person name="Iwama A."/>
            <person name="Ishikawa T."/>
            <person name="Jakt M."/>
            <person name="Kanapin A."/>
            <person name="Katoh M."/>
            <person name="Kawasawa Y."/>
            <person name="Kelso J."/>
            <person name="Kitamura H."/>
            <person name="Kitano H."/>
            <person name="Kollias G."/>
            <person name="Krishnan S.P."/>
            <person name="Kruger A."/>
            <person name="Kummerfeld S.K."/>
            <person name="Kurochkin I.V."/>
            <person name="Lareau L.F."/>
            <person name="Lazarevic D."/>
            <person name="Lipovich L."/>
            <person name="Liu J."/>
            <person name="Liuni S."/>
            <person name="McWilliam S."/>
            <person name="Madan Babu M."/>
            <person name="Madera M."/>
            <person name="Marchionni L."/>
            <person name="Matsuda H."/>
            <person name="Matsuzawa S."/>
            <person name="Miki H."/>
            <person name="Mignone F."/>
            <person name="Miyake S."/>
            <person name="Morris K."/>
            <person name="Mottagui-Tabar S."/>
            <person name="Mulder N."/>
            <person name="Nakano N."/>
            <person name="Nakauchi H."/>
            <person name="Ng P."/>
            <person name="Nilsson R."/>
            <person name="Nishiguchi S."/>
            <person name="Nishikawa S."/>
            <person name="Nori F."/>
            <person name="Ohara O."/>
            <person name="Okazaki Y."/>
            <person name="Orlando V."/>
            <person name="Pang K.C."/>
            <person name="Pavan W.J."/>
            <person name="Pavesi G."/>
            <person name="Pesole G."/>
            <person name="Petrovsky N."/>
            <person name="Piazza S."/>
            <person name="Reed J."/>
            <person name="Reid J.F."/>
            <person name="Ring B.Z."/>
            <person name="Ringwald M."/>
            <person name="Rost B."/>
            <person name="Ruan Y."/>
            <person name="Salzberg S.L."/>
            <person name="Sandelin A."/>
            <person name="Schneider C."/>
            <person name="Schoenbach C."/>
            <person name="Sekiguchi K."/>
            <person name="Semple C.A."/>
            <person name="Seno S."/>
            <person name="Sessa L."/>
            <person name="Sheng Y."/>
            <person name="Shibata Y."/>
            <person name="Shimada H."/>
            <person name="Shimada K."/>
            <person name="Silva D."/>
            <person name="Sinclair B."/>
            <person name="Sperling S."/>
            <person name="Stupka E."/>
            <person name="Sugiura K."/>
            <person name="Sultana R."/>
            <person name="Takenaka Y."/>
            <person name="Taki K."/>
            <person name="Tammoja K."/>
            <person name="Tan S.L."/>
            <person name="Tang S."/>
            <person name="Taylor M.S."/>
            <person name="Tegner J."/>
            <person name="Teichmann S.A."/>
            <person name="Ueda H.R."/>
            <person name="van Nimwegen E."/>
            <person name="Verardo R."/>
            <person name="Wei C.L."/>
            <person name="Yagi K."/>
            <person name="Yamanishi H."/>
            <person name="Zabarovsky E."/>
            <person name="Zhu S."/>
            <person name="Zimmer A."/>
            <person name="Hide W."/>
            <person name="Bult C."/>
            <person name="Grimmond S.M."/>
            <person name="Teasdale R.D."/>
            <person name="Liu E.T."/>
            <person name="Brusic V."/>
            <person name="Quackenbush J."/>
            <person name="Wahlestedt C."/>
            <person name="Mattick J.S."/>
            <person name="Hume D.A."/>
            <person name="Kai C."/>
            <person name="Sasaki D."/>
            <person name="Tomaru Y."/>
            <person name="Fukuda S."/>
            <person name="Kanamori-Katayama M."/>
            <person name="Suzuki M."/>
            <person name="Aoki J."/>
            <person name="Arakawa T."/>
            <person name="Iida J."/>
            <person name="Imamura K."/>
            <person name="Itoh M."/>
            <person name="Kato T."/>
            <person name="Kawaji H."/>
            <person name="Kawagashira N."/>
            <person name="Kawashima T."/>
            <person name="Kojima M."/>
            <person name="Kondo S."/>
            <person name="Konno H."/>
            <person name="Nakano K."/>
            <person name="Ninomiya N."/>
            <person name="Nishio T."/>
            <person name="Okada M."/>
            <person name="Plessy C."/>
            <person name="Shibata K."/>
            <person name="Shiraki T."/>
            <person name="Suzuki S."/>
            <person name="Tagami M."/>
            <person name="Waki K."/>
            <person name="Watahiki A."/>
            <person name="Okamura-Oho Y."/>
            <person name="Suzuki H."/>
            <person name="Kawai J."/>
            <person name="Hayashizaki Y."/>
        </authorList>
    </citation>
    <scope>NUCLEOTIDE SEQUENCE [LARGE SCALE MRNA] (ISOFORM 1)</scope>
    <source>
        <strain>C57BL/6J</strain>
        <strain>NOD</strain>
        <tissue>Mammary gland</tissue>
        <tissue>Thymus</tissue>
    </source>
</reference>
<reference key="2">
    <citation type="journal article" date="2003" name="DNA Res.">
        <title>Prediction of the coding sequences of mouse homologues of KIAA gene: III. The complete nucleotide sequences of 500 mouse KIAA-homologous cDNAs identified by screening of terminal sequences of cDNA clones randomly sampled from size-fractionated libraries.</title>
        <authorList>
            <person name="Okazaki N."/>
            <person name="Kikuno R."/>
            <person name="Ohara R."/>
            <person name="Inamoto S."/>
            <person name="Koseki H."/>
            <person name="Hiraoka S."/>
            <person name="Saga Y."/>
            <person name="Nagase T."/>
            <person name="Ohara O."/>
            <person name="Koga H."/>
        </authorList>
    </citation>
    <scope>NUCLEOTIDE SEQUENCE [LARGE SCALE MRNA] (ISOFORM 2)</scope>
    <source>
        <tissue>Embryonic tail</tissue>
    </source>
</reference>
<reference key="3">
    <citation type="journal article" date="2004" name="Genome Res.">
        <title>The status, quality, and expansion of the NIH full-length cDNA project: the Mammalian Gene Collection (MGC).</title>
        <authorList>
            <consortium name="The MGC Project Team"/>
        </authorList>
    </citation>
    <scope>NUCLEOTIDE SEQUENCE [LARGE SCALE MRNA] (ISOFORM 1)</scope>
    <source>
        <strain>FVB/N</strain>
        <strain>FVB/N-3</strain>
        <tissue>Eye</tissue>
        <tissue>Mammary tumor</tissue>
    </source>
</reference>
<reference key="4">
    <citation type="journal article" date="2010" name="Cell">
        <title>A tissue-specific atlas of mouse protein phosphorylation and expression.</title>
        <authorList>
            <person name="Huttlin E.L."/>
            <person name="Jedrychowski M.P."/>
            <person name="Elias J.E."/>
            <person name="Goswami T."/>
            <person name="Rad R."/>
            <person name="Beausoleil S.A."/>
            <person name="Villen J."/>
            <person name="Haas W."/>
            <person name="Sowa M.E."/>
            <person name="Gygi S.P."/>
        </authorList>
    </citation>
    <scope>IDENTIFICATION BY MASS SPECTROMETRY [LARGE SCALE ANALYSIS]</scope>
    <source>
        <tissue>Brain</tissue>
        <tissue>Brown adipose tissue</tissue>
        <tissue>Heart</tissue>
        <tissue>Kidney</tissue>
        <tissue>Liver</tissue>
        <tissue>Lung</tissue>
        <tissue>Pancreas</tissue>
        <tissue>Spleen</tissue>
        <tissue>Testis</tissue>
    </source>
</reference>
<proteinExistence type="evidence at protein level"/>
<sequence>MFLYNLTLQRATGISFAIHGNFSGTKQQEIVVSRGKILELLRPDPNTGKVHTLLTVEVFGVIRSLMAFRLTGGTKDYIVVGSDSGRIVILEYQPSKNMFEKIHQETFGKSGCRRIVPGQFLAVDPKGRAVMISAIEKQKLVYILNRDAAARLTISSPLEAHKANTLVYHVVGVDVGFENPMFACLEMDYEEADNDPTGEAAANTQQTLTFYELDLGLNHVVRKYSEPLEEHGNFLITVPGGSDGPSGVLICSENYITYKNFGDQPDIRCPIPRRRNDLDDPERGMIFVCSATHKTKSMFFFLAQTEQGDIFKITLETDEDMVTEIRLKYFDTVPVAAAMCVLKTGFLFVASEFGNHYLYQIAHLGDDDEEPEFSSAMPLEEGDTFFFQPRPLKNLVLVDELDSLSPILFCQIADLANEDTPQLYVACGRGPRSSLRVLRHGLEVSEMAVSELPGNPNAVWTVRRHIEDEFDAYIIVSFVNATLVLSIGETVEEVTDSGFLGTTPTLSCSLLGDDALVQVYPDGIRHIRADKRVNEWKTPGKKTIVKCAVNQRQVVIALTGGELVYFEMDPSGQLNEYTERKEMSADVVCMSLANVPPGEQRSRFLAVGLVDNTVRIISLDPSDCLQPLSMQALPAQPESLCIVEMGGTEKQDELGERGSIGFLYLNIGLQNGVLLRTVLDPVTGDLSDTRTRYLGSRPVKLFRVRMQGQEAVLAMSSRSWLSYSYQSRFHLTPLSYETLEFASGFASEQCPEGIVAISTNTLRILALEKLGAVFNQVAFPLQYTPRKFVIHPESNNLIIIETDHNAYTEATKAQRKQQMAEEMVEAAGEDERELAAEMAAAFLNENLPESIFGAPKAGNGQWASVIRVMNPIQGNTLDLVQLEQNEAAFSVAVCRFSNTGEDWYVLVGVAKDLILSPRSVAGGFVYTYKLVNNGEKLEFLHKTPVEEVPAAIAPFQGRVLIGVGKLLRVYDLGKKKLLRKCENKHIANYISGIQTIGHRVIVSDVQESFIWVRYKRNENQLIIFADDTYPRWVTTASLLDYDTVAGADKFGNICVVRLPPNTNDEVDEDPTGNKALWDRGLLNGASQKAEVIMNYHVGETVLSLQKTTLIPGGSESLVYTTLSGGIGILVPFTSHEDHDFFQHVEMHLRSEHPPLCGRDHLSFRSYYFPVKNVIDGDLCEQFNSMEPNKQKNVSEELDRTPPEVSKKLEDIRTRYAF</sequence>